<gene>
    <name type="primary">CDKN2D</name>
</gene>
<protein>
    <recommendedName>
        <fullName>Cyclin-dependent kinase 4 inhibitor D</fullName>
    </recommendedName>
    <alternativeName>
        <fullName>p19-INK4d</fullName>
    </alternativeName>
</protein>
<accession>Q29RV0</accession>
<sequence>MLLEEVHAGDRLSGAAARGDVQEVRRLLHSELVHPDVLNRFGKTALQVMMFGSPTIALELLKQGASPNVQDASGTTPAHDAARTGFLDTLKVLVEHGADVNAPDGTGALPIHLAVREGHTSVVSFLATESDLHHRDATGLTPLELARGRGAQELMDILQRHTVAPL</sequence>
<reference key="1">
    <citation type="submission" date="2006-02" db="EMBL/GenBank/DDBJ databases">
        <authorList>
            <consortium name="NIH - Mammalian Gene Collection (MGC) project"/>
        </authorList>
    </citation>
    <scope>NUCLEOTIDE SEQUENCE [LARGE SCALE MRNA]</scope>
    <source>
        <strain>Hereford</strain>
        <tissue>Testis</tissue>
    </source>
</reference>
<feature type="chain" id="PRO_0000310855" description="Cyclin-dependent kinase 4 inhibitor D">
    <location>
        <begin position="1"/>
        <end position="166"/>
    </location>
</feature>
<feature type="repeat" description="ANK 1">
    <location>
        <begin position="41"/>
        <end position="69"/>
    </location>
</feature>
<feature type="repeat" description="ANK 2">
    <location>
        <begin position="73"/>
        <end position="102"/>
    </location>
</feature>
<feature type="repeat" description="ANK 3">
    <location>
        <begin position="106"/>
        <end position="135"/>
    </location>
</feature>
<feature type="repeat" description="ANK 4">
    <location>
        <begin position="138"/>
        <end position="166"/>
    </location>
</feature>
<feature type="modified residue" description="N-acetylmethionine" evidence="2">
    <location>
        <position position="1"/>
    </location>
</feature>
<comment type="function">
    <text evidence="1">Interacts strongly with CDK4 and CDK6 and inhibits them.</text>
</comment>
<comment type="subunit">
    <text evidence="1">Interacts with CDK6.</text>
</comment>
<comment type="subcellular location">
    <subcellularLocation>
        <location evidence="1">Nucleus</location>
    </subcellularLocation>
    <subcellularLocation>
        <location evidence="1">Cytoplasm</location>
    </subcellularLocation>
</comment>
<comment type="similarity">
    <text evidence="3">Belongs to the CDKN2 cyclin-dependent kinase inhibitor family.</text>
</comment>
<proteinExistence type="evidence at transcript level"/>
<keyword id="KW-0007">Acetylation</keyword>
<keyword id="KW-0040">ANK repeat</keyword>
<keyword id="KW-0131">Cell cycle</keyword>
<keyword id="KW-0963">Cytoplasm</keyword>
<keyword id="KW-0539">Nucleus</keyword>
<keyword id="KW-1185">Reference proteome</keyword>
<keyword id="KW-0677">Repeat</keyword>
<keyword id="KW-0043">Tumor suppressor</keyword>
<name>CDN2D_BOVIN</name>
<evidence type="ECO:0000250" key="1"/>
<evidence type="ECO:0000250" key="2">
    <source>
        <dbReference type="UniProtKB" id="P55273"/>
    </source>
</evidence>
<evidence type="ECO:0000305" key="3"/>
<organism>
    <name type="scientific">Bos taurus</name>
    <name type="common">Bovine</name>
    <dbReference type="NCBI Taxonomy" id="9913"/>
    <lineage>
        <taxon>Eukaryota</taxon>
        <taxon>Metazoa</taxon>
        <taxon>Chordata</taxon>
        <taxon>Craniata</taxon>
        <taxon>Vertebrata</taxon>
        <taxon>Euteleostomi</taxon>
        <taxon>Mammalia</taxon>
        <taxon>Eutheria</taxon>
        <taxon>Laurasiatheria</taxon>
        <taxon>Artiodactyla</taxon>
        <taxon>Ruminantia</taxon>
        <taxon>Pecora</taxon>
        <taxon>Bovidae</taxon>
        <taxon>Bovinae</taxon>
        <taxon>Bos</taxon>
    </lineage>
</organism>
<dbReference type="EMBL" id="BC114005">
    <property type="protein sequence ID" value="AAI14006.1"/>
    <property type="molecule type" value="mRNA"/>
</dbReference>
<dbReference type="RefSeq" id="NP_001039515.1">
    <property type="nucleotide sequence ID" value="NM_001046050.1"/>
</dbReference>
<dbReference type="RefSeq" id="XP_010805120.1">
    <property type="nucleotide sequence ID" value="XM_010806818.1"/>
</dbReference>
<dbReference type="SMR" id="Q29RV0"/>
<dbReference type="FunCoup" id="Q29RV0">
    <property type="interactions" value="742"/>
</dbReference>
<dbReference type="STRING" id="9913.ENSBTAP00000058401"/>
<dbReference type="PaxDb" id="9913-ENSBTAP00000014209"/>
<dbReference type="Ensembl" id="ENSBTAT00000014209.5">
    <property type="protein sequence ID" value="ENSBTAP00000014209.3"/>
    <property type="gene ID" value="ENSBTAG00000010731.5"/>
</dbReference>
<dbReference type="GeneID" id="510244"/>
<dbReference type="KEGG" id="bta:510244"/>
<dbReference type="CTD" id="1032"/>
<dbReference type="VEuPathDB" id="HostDB:ENSBTAG00000010731"/>
<dbReference type="VGNC" id="VGNC:27147">
    <property type="gene designation" value="CDKN2D"/>
</dbReference>
<dbReference type="eggNOG" id="KOG0504">
    <property type="taxonomic scope" value="Eukaryota"/>
</dbReference>
<dbReference type="GeneTree" id="ENSGT00940000159801"/>
<dbReference type="HOGENOM" id="CLU_000134_37_0_1"/>
<dbReference type="InParanoid" id="Q29RV0"/>
<dbReference type="OMA" id="HTDVVCF"/>
<dbReference type="OrthoDB" id="21416at2759"/>
<dbReference type="TreeFam" id="TF333311"/>
<dbReference type="Reactome" id="R-BTA-2559580">
    <property type="pathway name" value="Oxidative Stress Induced Senescence"/>
</dbReference>
<dbReference type="Reactome" id="R-BTA-2559582">
    <property type="pathway name" value="Senescence-Associated Secretory Phenotype (SASP)"/>
</dbReference>
<dbReference type="Reactome" id="R-BTA-2559585">
    <property type="pathway name" value="Oncogene Induced Senescence"/>
</dbReference>
<dbReference type="Reactome" id="R-BTA-69231">
    <property type="pathway name" value="Cyclin D associated events in G1"/>
</dbReference>
<dbReference type="Proteomes" id="UP000009136">
    <property type="component" value="Chromosome 7"/>
</dbReference>
<dbReference type="Bgee" id="ENSBTAG00000010731">
    <property type="expression patterns" value="Expressed in Ammon's horn and 106 other cell types or tissues"/>
</dbReference>
<dbReference type="GO" id="GO:0097129">
    <property type="term" value="C:cyclin D2-CDK4 complex"/>
    <property type="evidence" value="ECO:0007669"/>
    <property type="project" value="Ensembl"/>
</dbReference>
<dbReference type="GO" id="GO:0005829">
    <property type="term" value="C:cytosol"/>
    <property type="evidence" value="ECO:0007669"/>
    <property type="project" value="Ensembl"/>
</dbReference>
<dbReference type="GO" id="GO:0005654">
    <property type="term" value="C:nucleoplasm"/>
    <property type="evidence" value="ECO:0007669"/>
    <property type="project" value="Ensembl"/>
</dbReference>
<dbReference type="GO" id="GO:0005634">
    <property type="term" value="C:nucleus"/>
    <property type="evidence" value="ECO:0000318"/>
    <property type="project" value="GO_Central"/>
</dbReference>
<dbReference type="GO" id="GO:0004861">
    <property type="term" value="F:cyclin-dependent protein serine/threonine kinase inhibitor activity"/>
    <property type="evidence" value="ECO:0000318"/>
    <property type="project" value="GO_Central"/>
</dbReference>
<dbReference type="GO" id="GO:0019901">
    <property type="term" value="F:protein kinase binding"/>
    <property type="evidence" value="ECO:0007669"/>
    <property type="project" value="Ensembl"/>
</dbReference>
<dbReference type="GO" id="GO:0048102">
    <property type="term" value="P:autophagic cell death"/>
    <property type="evidence" value="ECO:0007669"/>
    <property type="project" value="Ensembl"/>
</dbReference>
<dbReference type="GO" id="GO:0000731">
    <property type="term" value="P:DNA synthesis involved in DNA repair"/>
    <property type="evidence" value="ECO:0007669"/>
    <property type="project" value="Ensembl"/>
</dbReference>
<dbReference type="GO" id="GO:1902807">
    <property type="term" value="P:negative regulation of cell cycle G1/S phase transition"/>
    <property type="evidence" value="ECO:0007669"/>
    <property type="project" value="Ensembl"/>
</dbReference>
<dbReference type="GO" id="GO:0030308">
    <property type="term" value="P:negative regulation of cell growth"/>
    <property type="evidence" value="ECO:0007669"/>
    <property type="project" value="Ensembl"/>
</dbReference>
<dbReference type="GO" id="GO:0008285">
    <property type="term" value="P:negative regulation of cell population proliferation"/>
    <property type="evidence" value="ECO:0007669"/>
    <property type="project" value="Ensembl"/>
</dbReference>
<dbReference type="GO" id="GO:1902230">
    <property type="term" value="P:negative regulation of intrinsic apoptotic signaling pathway in response to DNA damage"/>
    <property type="evidence" value="ECO:0007669"/>
    <property type="project" value="Ensembl"/>
</dbReference>
<dbReference type="GO" id="GO:2000045">
    <property type="term" value="P:regulation of G1/S transition of mitotic cell cycle"/>
    <property type="evidence" value="ECO:0007669"/>
    <property type="project" value="Ensembl"/>
</dbReference>
<dbReference type="GO" id="GO:0032526">
    <property type="term" value="P:response to retinoic acid"/>
    <property type="evidence" value="ECO:0007669"/>
    <property type="project" value="Ensembl"/>
</dbReference>
<dbReference type="GO" id="GO:0009411">
    <property type="term" value="P:response to UV"/>
    <property type="evidence" value="ECO:0007669"/>
    <property type="project" value="Ensembl"/>
</dbReference>
<dbReference type="GO" id="GO:0033280">
    <property type="term" value="P:response to vitamin D"/>
    <property type="evidence" value="ECO:0007669"/>
    <property type="project" value="Ensembl"/>
</dbReference>
<dbReference type="GO" id="GO:0007605">
    <property type="term" value="P:sensory perception of sound"/>
    <property type="evidence" value="ECO:0007669"/>
    <property type="project" value="Ensembl"/>
</dbReference>
<dbReference type="FunFam" id="1.25.40.20:FF:000169">
    <property type="entry name" value="Cyclin-dependent kinase 4 inhibitor D"/>
    <property type="match status" value="1"/>
</dbReference>
<dbReference type="Gene3D" id="1.25.40.20">
    <property type="entry name" value="Ankyrin repeat-containing domain"/>
    <property type="match status" value="1"/>
</dbReference>
<dbReference type="InterPro" id="IPR050776">
    <property type="entry name" value="Ank_Repeat/CDKN_Inhibitor"/>
</dbReference>
<dbReference type="InterPro" id="IPR002110">
    <property type="entry name" value="Ankyrin_rpt"/>
</dbReference>
<dbReference type="InterPro" id="IPR036770">
    <property type="entry name" value="Ankyrin_rpt-contain_sf"/>
</dbReference>
<dbReference type="PANTHER" id="PTHR24201">
    <property type="entry name" value="ANK_REP_REGION DOMAIN-CONTAINING PROTEIN"/>
    <property type="match status" value="1"/>
</dbReference>
<dbReference type="PANTHER" id="PTHR24201:SF7">
    <property type="entry name" value="CYCLIN-DEPENDENT KINASE 4 INHIBITOR D"/>
    <property type="match status" value="1"/>
</dbReference>
<dbReference type="Pfam" id="PF00023">
    <property type="entry name" value="Ank"/>
    <property type="match status" value="1"/>
</dbReference>
<dbReference type="Pfam" id="PF12796">
    <property type="entry name" value="Ank_2"/>
    <property type="match status" value="1"/>
</dbReference>
<dbReference type="SMART" id="SM00248">
    <property type="entry name" value="ANK"/>
    <property type="match status" value="3"/>
</dbReference>
<dbReference type="SUPFAM" id="SSF48403">
    <property type="entry name" value="Ankyrin repeat"/>
    <property type="match status" value="1"/>
</dbReference>
<dbReference type="PROSITE" id="PS50297">
    <property type="entry name" value="ANK_REP_REGION"/>
    <property type="match status" value="1"/>
</dbReference>
<dbReference type="PROSITE" id="PS50088">
    <property type="entry name" value="ANK_REPEAT"/>
    <property type="match status" value="1"/>
</dbReference>